<comment type="function">
    <text evidence="1">Acyl carrier protein involved in meromycolate extension.</text>
</comment>
<comment type="subcellular location">
    <subcellularLocation>
        <location evidence="1">Cytoplasm</location>
    </subcellularLocation>
</comment>
<comment type="PTM">
    <text evidence="4">4'-phosphopantetheine is transferred from CoA to a specific serine of apo-AcpM.</text>
</comment>
<comment type="similarity">
    <text evidence="4">Belongs to the acyl carrier protein (ACP) family.</text>
</comment>
<protein>
    <recommendedName>
        <fullName>Meromycolate extension acyl carrier protein</fullName>
        <shortName>ACP</shortName>
    </recommendedName>
</protein>
<proteinExistence type="evidence at protein level"/>
<feature type="chain" id="PRO_0000397183" description="Meromycolate extension acyl carrier protein">
    <location>
        <begin position="1"/>
        <end position="99"/>
    </location>
</feature>
<feature type="domain" description="Carrier" evidence="2">
    <location>
        <begin position="3"/>
        <end position="81"/>
    </location>
</feature>
<feature type="modified residue" description="O-(pantetheine 4'-phosphoryl)serine" evidence="2">
    <location>
        <position position="41"/>
    </location>
</feature>
<feature type="cross-link" description="Isoglutamyl lysine isopeptide (Lys-Gln) (interchain with Q-Cter in protein Pup)" evidence="3">
    <location>
        <position position="79"/>
    </location>
</feature>
<feature type="helix" evidence="5">
    <location>
        <begin position="5"/>
        <end position="19"/>
    </location>
</feature>
<feature type="helix" evidence="7">
    <location>
        <begin position="24"/>
        <end position="26"/>
    </location>
</feature>
<feature type="helix" evidence="5">
    <location>
        <begin position="33"/>
        <end position="37"/>
    </location>
</feature>
<feature type="helix" evidence="5">
    <location>
        <begin position="41"/>
        <end position="54"/>
    </location>
</feature>
<feature type="turn" evidence="5">
    <location>
        <begin position="62"/>
        <end position="66"/>
    </location>
</feature>
<feature type="helix" evidence="5">
    <location>
        <begin position="70"/>
        <end position="80"/>
    </location>
</feature>
<feature type="helix" evidence="6">
    <location>
        <begin position="88"/>
        <end position="90"/>
    </location>
</feature>
<name>ACPM_MYCS2</name>
<reference key="1">
    <citation type="submission" date="2006-10" db="EMBL/GenBank/DDBJ databases">
        <authorList>
            <person name="Fleischmann R.D."/>
            <person name="Dodson R.J."/>
            <person name="Haft D.H."/>
            <person name="Merkel J.S."/>
            <person name="Nelson W.C."/>
            <person name="Fraser C.M."/>
        </authorList>
    </citation>
    <scope>NUCLEOTIDE SEQUENCE [LARGE SCALE GENOMIC DNA]</scope>
    <source>
        <strain>ATCC 700084 / mc(2)155</strain>
    </source>
</reference>
<reference key="2">
    <citation type="journal article" date="2007" name="Genome Biol.">
        <title>Interrupted coding sequences in Mycobacterium smegmatis: authentic mutations or sequencing errors?</title>
        <authorList>
            <person name="Deshayes C."/>
            <person name="Perrodou E."/>
            <person name="Gallien S."/>
            <person name="Euphrasie D."/>
            <person name="Schaeffer C."/>
            <person name="Van-Dorsselaer A."/>
            <person name="Poch O."/>
            <person name="Lecompte O."/>
            <person name="Reyrat J.-M."/>
        </authorList>
    </citation>
    <scope>NUCLEOTIDE SEQUENCE [LARGE SCALE GENOMIC DNA]</scope>
    <source>
        <strain>ATCC 700084 / mc(2)155</strain>
    </source>
</reference>
<reference key="3">
    <citation type="journal article" date="2009" name="Genome Res.">
        <title>Ortho-proteogenomics: multiple proteomes investigation through orthology and a new MS-based protocol.</title>
        <authorList>
            <person name="Gallien S."/>
            <person name="Perrodou E."/>
            <person name="Carapito C."/>
            <person name="Deshayes C."/>
            <person name="Reyrat J.-M."/>
            <person name="Van Dorsselaer A."/>
            <person name="Poch O."/>
            <person name="Schaeffer C."/>
            <person name="Lecompte O."/>
        </authorList>
    </citation>
    <scope>NUCLEOTIDE SEQUENCE [LARGE SCALE GENOMIC DNA]</scope>
    <source>
        <strain>ATCC 700084 / mc(2)155</strain>
    </source>
</reference>
<reference key="4">
    <citation type="journal article" date="2010" name="Mol. Biosyst.">
        <title>Expansion of the mycobacterial 'PUPylome'.</title>
        <authorList>
            <person name="Watrous J."/>
            <person name="Burns K."/>
            <person name="Liu W.T."/>
            <person name="Patel A."/>
            <person name="Hook V."/>
            <person name="Bafna V."/>
            <person name="Barry C.E. III"/>
            <person name="Bark S."/>
            <person name="Dorrestein P.C."/>
        </authorList>
    </citation>
    <scope>PUPYLATION AT LYS-79</scope>
    <scope>IDENTIFICATION BY MASS SPECTROMETRY</scope>
</reference>
<gene>
    <name type="primary">acpM</name>
    <name type="ordered locus">MSMEG_4326</name>
    <name type="ordered locus">MSMEI_4226</name>
</gene>
<evidence type="ECO:0000250" key="1"/>
<evidence type="ECO:0000255" key="2">
    <source>
        <dbReference type="PROSITE-ProRule" id="PRU00258"/>
    </source>
</evidence>
<evidence type="ECO:0000269" key="3">
    <source>
    </source>
</evidence>
<evidence type="ECO:0000305" key="4"/>
<evidence type="ECO:0007829" key="5">
    <source>
        <dbReference type="PDB" id="7BVE"/>
    </source>
</evidence>
<evidence type="ECO:0007829" key="6">
    <source>
        <dbReference type="PDB" id="7BVG"/>
    </source>
</evidence>
<evidence type="ECO:0007829" key="7">
    <source>
        <dbReference type="PDB" id="9DP6"/>
    </source>
</evidence>
<accession>A0R0B3</accession>
<accession>I7G4X4</accession>
<organism>
    <name type="scientific">Mycolicibacterium smegmatis (strain ATCC 700084 / mc(2)155)</name>
    <name type="common">Mycobacterium smegmatis</name>
    <dbReference type="NCBI Taxonomy" id="246196"/>
    <lineage>
        <taxon>Bacteria</taxon>
        <taxon>Bacillati</taxon>
        <taxon>Actinomycetota</taxon>
        <taxon>Actinomycetes</taxon>
        <taxon>Mycobacteriales</taxon>
        <taxon>Mycobacteriaceae</taxon>
        <taxon>Mycolicibacterium</taxon>
    </lineage>
</organism>
<dbReference type="EMBL" id="CP000480">
    <property type="protein sequence ID" value="ABK73710.1"/>
    <property type="molecule type" value="Genomic_DNA"/>
</dbReference>
<dbReference type="EMBL" id="CP001663">
    <property type="protein sequence ID" value="AFP40682.1"/>
    <property type="molecule type" value="Genomic_DNA"/>
</dbReference>
<dbReference type="RefSeq" id="WP_003895721.1">
    <property type="nucleotide sequence ID" value="NZ_SIJM01000003.1"/>
</dbReference>
<dbReference type="RefSeq" id="YP_888601.1">
    <property type="nucleotide sequence ID" value="NC_008596.1"/>
</dbReference>
<dbReference type="PDB" id="7BVC">
    <property type="method" value="EM"/>
    <property type="resolution" value="2.90 A"/>
    <property type="chains" value="P=1-99"/>
</dbReference>
<dbReference type="PDB" id="7BVE">
    <property type="method" value="EM"/>
    <property type="resolution" value="2.81 A"/>
    <property type="chains" value="C/D=1-99"/>
</dbReference>
<dbReference type="PDB" id="7BVF">
    <property type="method" value="EM"/>
    <property type="resolution" value="2.97 A"/>
    <property type="chains" value="P=1-99"/>
</dbReference>
<dbReference type="PDB" id="7BVG">
    <property type="method" value="EM"/>
    <property type="resolution" value="3.10 A"/>
    <property type="chains" value="P=1-99"/>
</dbReference>
<dbReference type="PDB" id="7BVH">
    <property type="method" value="X-ray"/>
    <property type="resolution" value="3.30 A"/>
    <property type="chains" value="C/D=1-99"/>
</dbReference>
<dbReference type="PDB" id="7BWR">
    <property type="method" value="EM"/>
    <property type="resolution" value="3.50 A"/>
    <property type="chains" value="C/D=1-99"/>
</dbReference>
<dbReference type="PDB" id="7BX8">
    <property type="method" value="EM"/>
    <property type="resolution" value="3.60 A"/>
    <property type="chains" value="C/D=1-99"/>
</dbReference>
<dbReference type="PDB" id="9DP6">
    <property type="method" value="EM"/>
    <property type="resolution" value="2.81 A"/>
    <property type="chains" value="B=1-99"/>
</dbReference>
<dbReference type="PDBsum" id="7BVC"/>
<dbReference type="PDBsum" id="7BVE"/>
<dbReference type="PDBsum" id="7BVF"/>
<dbReference type="PDBsum" id="7BVG"/>
<dbReference type="PDBsum" id="7BVH"/>
<dbReference type="PDBsum" id="7BWR"/>
<dbReference type="PDBsum" id="7BX8"/>
<dbReference type="PDBsum" id="9DP6"/>
<dbReference type="EMDB" id="EMD-30216"/>
<dbReference type="EMDB" id="EMD-30217"/>
<dbReference type="EMDB" id="EMD-30218"/>
<dbReference type="EMDB" id="EMD-30219"/>
<dbReference type="EMDB" id="EMD-30234"/>
<dbReference type="EMDB" id="EMD-30236"/>
<dbReference type="EMDB" id="EMD-47097"/>
<dbReference type="SMR" id="A0R0B3"/>
<dbReference type="STRING" id="246196.MSMEG_4326"/>
<dbReference type="PaxDb" id="246196-MSMEI_4226"/>
<dbReference type="GeneID" id="93459045"/>
<dbReference type="KEGG" id="msb:LJ00_21440"/>
<dbReference type="KEGG" id="msg:MSMEI_4226"/>
<dbReference type="KEGG" id="msm:MSMEG_4326"/>
<dbReference type="PATRIC" id="fig|246196.19.peg.4244"/>
<dbReference type="eggNOG" id="COG0236">
    <property type="taxonomic scope" value="Bacteria"/>
</dbReference>
<dbReference type="OrthoDB" id="9804551at2"/>
<dbReference type="Proteomes" id="UP000000757">
    <property type="component" value="Chromosome"/>
</dbReference>
<dbReference type="Proteomes" id="UP000006158">
    <property type="component" value="Chromosome"/>
</dbReference>
<dbReference type="GO" id="GO:0005829">
    <property type="term" value="C:cytosol"/>
    <property type="evidence" value="ECO:0007669"/>
    <property type="project" value="TreeGrafter"/>
</dbReference>
<dbReference type="GO" id="GO:0016020">
    <property type="term" value="C:membrane"/>
    <property type="evidence" value="ECO:0007669"/>
    <property type="project" value="GOC"/>
</dbReference>
<dbReference type="GO" id="GO:0000035">
    <property type="term" value="F:acyl binding"/>
    <property type="evidence" value="ECO:0007669"/>
    <property type="project" value="TreeGrafter"/>
</dbReference>
<dbReference type="GO" id="GO:0000036">
    <property type="term" value="F:acyl carrier activity"/>
    <property type="evidence" value="ECO:0007669"/>
    <property type="project" value="UniProtKB-UniRule"/>
</dbReference>
<dbReference type="GO" id="GO:0009245">
    <property type="term" value="P:lipid A biosynthetic process"/>
    <property type="evidence" value="ECO:0007669"/>
    <property type="project" value="TreeGrafter"/>
</dbReference>
<dbReference type="FunFam" id="1.10.1200.10:FF:000010">
    <property type="entry name" value="Acyl carrier protein"/>
    <property type="match status" value="1"/>
</dbReference>
<dbReference type="Gene3D" id="1.10.1200.10">
    <property type="entry name" value="ACP-like"/>
    <property type="match status" value="1"/>
</dbReference>
<dbReference type="HAMAP" id="MF_01217">
    <property type="entry name" value="Acyl_carrier"/>
    <property type="match status" value="1"/>
</dbReference>
<dbReference type="InterPro" id="IPR003231">
    <property type="entry name" value="ACP"/>
</dbReference>
<dbReference type="InterPro" id="IPR036736">
    <property type="entry name" value="ACP-like_sf"/>
</dbReference>
<dbReference type="InterPro" id="IPR053393">
    <property type="entry name" value="Meromycolate-ACP"/>
</dbReference>
<dbReference type="InterPro" id="IPR009081">
    <property type="entry name" value="PP-bd_ACP"/>
</dbReference>
<dbReference type="NCBIfam" id="NF040636">
    <property type="entry name" value="AcpM"/>
    <property type="match status" value="1"/>
</dbReference>
<dbReference type="NCBIfam" id="NF002147">
    <property type="entry name" value="PRK00982.1-1"/>
    <property type="match status" value="1"/>
</dbReference>
<dbReference type="NCBIfam" id="NF002148">
    <property type="entry name" value="PRK00982.1-2"/>
    <property type="match status" value="1"/>
</dbReference>
<dbReference type="NCBIfam" id="NF002150">
    <property type="entry name" value="PRK00982.1-4"/>
    <property type="match status" value="1"/>
</dbReference>
<dbReference type="PANTHER" id="PTHR20863">
    <property type="entry name" value="ACYL CARRIER PROTEIN"/>
    <property type="match status" value="1"/>
</dbReference>
<dbReference type="PANTHER" id="PTHR20863:SF76">
    <property type="entry name" value="CARRIER DOMAIN-CONTAINING PROTEIN"/>
    <property type="match status" value="1"/>
</dbReference>
<dbReference type="Pfam" id="PF00550">
    <property type="entry name" value="PP-binding"/>
    <property type="match status" value="1"/>
</dbReference>
<dbReference type="SUPFAM" id="SSF47336">
    <property type="entry name" value="ACP-like"/>
    <property type="match status" value="1"/>
</dbReference>
<dbReference type="PROSITE" id="PS50075">
    <property type="entry name" value="CARRIER"/>
    <property type="match status" value="1"/>
</dbReference>
<sequence>MAATQEEIIAGLAEIIEEVTGIEPSEVTPEKSFVDDLDIDSLSMVEIAVQTEDKYGVKIPDEDLAGLRTVGDVVAYIQKLEEENPEAAAALREKFAADQ</sequence>
<keyword id="KW-0002">3D-structure</keyword>
<keyword id="KW-0963">Cytoplasm</keyword>
<keyword id="KW-0275">Fatty acid biosynthesis</keyword>
<keyword id="KW-0276">Fatty acid metabolism</keyword>
<keyword id="KW-1017">Isopeptide bond</keyword>
<keyword id="KW-0444">Lipid biosynthesis</keyword>
<keyword id="KW-0443">Lipid metabolism</keyword>
<keyword id="KW-0596">Phosphopantetheine</keyword>
<keyword id="KW-0597">Phosphoprotein</keyword>
<keyword id="KW-1185">Reference proteome</keyword>
<keyword id="KW-0832">Ubl conjugation</keyword>